<dbReference type="EC" id="4.1.1.37" evidence="1"/>
<dbReference type="EMBL" id="AP006716">
    <property type="protein sequence ID" value="BAE04437.1"/>
    <property type="molecule type" value="Genomic_DNA"/>
</dbReference>
<dbReference type="RefSeq" id="WP_011275429.1">
    <property type="nucleotide sequence ID" value="NC_007168.1"/>
</dbReference>
<dbReference type="SMR" id="Q4L7D8"/>
<dbReference type="KEGG" id="sha:SH1128"/>
<dbReference type="eggNOG" id="COG0407">
    <property type="taxonomic scope" value="Bacteria"/>
</dbReference>
<dbReference type="HOGENOM" id="CLU_040933_0_1_9"/>
<dbReference type="OrthoDB" id="9806656at2"/>
<dbReference type="UniPathway" id="UPA00251">
    <property type="reaction ID" value="UER00321"/>
</dbReference>
<dbReference type="Proteomes" id="UP000000543">
    <property type="component" value="Chromosome"/>
</dbReference>
<dbReference type="GO" id="GO:0005829">
    <property type="term" value="C:cytosol"/>
    <property type="evidence" value="ECO:0007669"/>
    <property type="project" value="TreeGrafter"/>
</dbReference>
<dbReference type="GO" id="GO:0004853">
    <property type="term" value="F:uroporphyrinogen decarboxylase activity"/>
    <property type="evidence" value="ECO:0007669"/>
    <property type="project" value="UniProtKB-UniRule"/>
</dbReference>
<dbReference type="GO" id="GO:0006782">
    <property type="term" value="P:protoporphyrinogen IX biosynthetic process"/>
    <property type="evidence" value="ECO:0007669"/>
    <property type="project" value="UniProtKB-UniRule"/>
</dbReference>
<dbReference type="CDD" id="cd00717">
    <property type="entry name" value="URO-D"/>
    <property type="match status" value="1"/>
</dbReference>
<dbReference type="FunFam" id="3.20.20.210:FF:000005">
    <property type="entry name" value="Uroporphyrinogen decarboxylase"/>
    <property type="match status" value="1"/>
</dbReference>
<dbReference type="Gene3D" id="3.20.20.210">
    <property type="match status" value="1"/>
</dbReference>
<dbReference type="HAMAP" id="MF_00218">
    <property type="entry name" value="URO_D"/>
    <property type="match status" value="1"/>
</dbReference>
<dbReference type="InterPro" id="IPR038071">
    <property type="entry name" value="UROD/MetE-like_sf"/>
</dbReference>
<dbReference type="InterPro" id="IPR006361">
    <property type="entry name" value="Uroporphyrinogen_deCO2ase_HemE"/>
</dbReference>
<dbReference type="InterPro" id="IPR000257">
    <property type="entry name" value="Uroporphyrinogen_deCOase"/>
</dbReference>
<dbReference type="NCBIfam" id="TIGR01464">
    <property type="entry name" value="hemE"/>
    <property type="match status" value="1"/>
</dbReference>
<dbReference type="PANTHER" id="PTHR21091">
    <property type="entry name" value="METHYLTETRAHYDROFOLATE:HOMOCYSTEINE METHYLTRANSFERASE RELATED"/>
    <property type="match status" value="1"/>
</dbReference>
<dbReference type="PANTHER" id="PTHR21091:SF169">
    <property type="entry name" value="UROPORPHYRINOGEN DECARBOXYLASE"/>
    <property type="match status" value="1"/>
</dbReference>
<dbReference type="Pfam" id="PF01208">
    <property type="entry name" value="URO-D"/>
    <property type="match status" value="1"/>
</dbReference>
<dbReference type="SUPFAM" id="SSF51726">
    <property type="entry name" value="UROD/MetE-like"/>
    <property type="match status" value="1"/>
</dbReference>
<dbReference type="PROSITE" id="PS00906">
    <property type="entry name" value="UROD_1"/>
    <property type="match status" value="1"/>
</dbReference>
<dbReference type="PROSITE" id="PS00907">
    <property type="entry name" value="UROD_2"/>
    <property type="match status" value="1"/>
</dbReference>
<sequence length="344" mass="38812">MHNKNNTILQTIKGEKTSHTPVWFMRQAGRSQPEYRKLKEKYSLFDITHQPELCAYVTQLPVDNYNTDAAVLYKDIMTPLKPIGVDVDIKSGIGPVISNPIKSVSDVDKLTQIDPKRDVPYVLETIQLLTQEKLNVPLIGFTGAPFTLASYMIEGGPSKNYNYTKAMMYGDEATWFALMNHLVQVSIDYVVAQVEAGAELIQIFDSWVGALNVQDYRYYIKPSMDKLINGIKAKYDVPVIMFGVGASHLINEWNDLAIDVLGLDWRTSISSATKMGVNKTLQGNLDPSLLLAPWDVIEQRVREILDEGMERGKHIFNLGHGVFPEVQPDTLKRVTQFVHDYTSK</sequence>
<comment type="function">
    <text evidence="1">Catalyzes the decarboxylation of four acetate groups of uroporphyrinogen-III to yield coproporphyrinogen-III.</text>
</comment>
<comment type="catalytic activity">
    <reaction evidence="1">
        <text>uroporphyrinogen III + 4 H(+) = coproporphyrinogen III + 4 CO2</text>
        <dbReference type="Rhea" id="RHEA:19865"/>
        <dbReference type="ChEBI" id="CHEBI:15378"/>
        <dbReference type="ChEBI" id="CHEBI:16526"/>
        <dbReference type="ChEBI" id="CHEBI:57308"/>
        <dbReference type="ChEBI" id="CHEBI:57309"/>
        <dbReference type="EC" id="4.1.1.37"/>
    </reaction>
</comment>
<comment type="pathway">
    <text evidence="1">Porphyrin-containing compound metabolism; protoporphyrin-IX biosynthesis; coproporphyrinogen-III from 5-aminolevulinate: step 4/4.</text>
</comment>
<comment type="subunit">
    <text evidence="1">Homodimer.</text>
</comment>
<comment type="subcellular location">
    <subcellularLocation>
        <location evidence="1">Cytoplasm</location>
    </subcellularLocation>
</comment>
<comment type="similarity">
    <text evidence="1">Belongs to the uroporphyrinogen decarboxylase family.</text>
</comment>
<feature type="chain" id="PRO_1000023986" description="Uroporphyrinogen decarboxylase">
    <location>
        <begin position="1"/>
        <end position="344"/>
    </location>
</feature>
<feature type="binding site" evidence="1">
    <location>
        <begin position="26"/>
        <end position="30"/>
    </location>
    <ligand>
        <name>substrate</name>
    </ligand>
</feature>
<feature type="binding site" evidence="1">
    <location>
        <position position="45"/>
    </location>
    <ligand>
        <name>substrate</name>
    </ligand>
</feature>
<feature type="binding site" evidence="1">
    <location>
        <position position="75"/>
    </location>
    <ligand>
        <name>substrate</name>
    </ligand>
</feature>
<feature type="binding site" evidence="1">
    <location>
        <position position="151"/>
    </location>
    <ligand>
        <name>substrate</name>
    </ligand>
</feature>
<feature type="binding site" evidence="1">
    <location>
        <position position="206"/>
    </location>
    <ligand>
        <name>substrate</name>
    </ligand>
</feature>
<feature type="binding site" evidence="1">
    <location>
        <position position="320"/>
    </location>
    <ligand>
        <name>substrate</name>
    </ligand>
</feature>
<feature type="site" description="Transition state stabilizer" evidence="1">
    <location>
        <position position="75"/>
    </location>
</feature>
<proteinExistence type="inferred from homology"/>
<keyword id="KW-0963">Cytoplasm</keyword>
<keyword id="KW-0210">Decarboxylase</keyword>
<keyword id="KW-0456">Lyase</keyword>
<keyword id="KW-0627">Porphyrin biosynthesis</keyword>
<protein>
    <recommendedName>
        <fullName evidence="1">Uroporphyrinogen decarboxylase</fullName>
        <shortName evidence="1">UPD</shortName>
        <shortName evidence="1">URO-D</shortName>
        <ecNumber evidence="1">4.1.1.37</ecNumber>
    </recommendedName>
</protein>
<name>DCUP_STAHJ</name>
<evidence type="ECO:0000255" key="1">
    <source>
        <dbReference type="HAMAP-Rule" id="MF_00218"/>
    </source>
</evidence>
<organism>
    <name type="scientific">Staphylococcus haemolyticus (strain JCSC1435)</name>
    <dbReference type="NCBI Taxonomy" id="279808"/>
    <lineage>
        <taxon>Bacteria</taxon>
        <taxon>Bacillati</taxon>
        <taxon>Bacillota</taxon>
        <taxon>Bacilli</taxon>
        <taxon>Bacillales</taxon>
        <taxon>Staphylococcaceae</taxon>
        <taxon>Staphylococcus</taxon>
    </lineage>
</organism>
<gene>
    <name evidence="1" type="primary">hemE</name>
    <name type="ordered locus">SH1128</name>
</gene>
<accession>Q4L7D8</accession>
<reference key="1">
    <citation type="journal article" date="2005" name="J. Bacteriol.">
        <title>Whole-genome sequencing of Staphylococcus haemolyticus uncovers the extreme plasticity of its genome and the evolution of human-colonizing staphylococcal species.</title>
        <authorList>
            <person name="Takeuchi F."/>
            <person name="Watanabe S."/>
            <person name="Baba T."/>
            <person name="Yuzawa H."/>
            <person name="Ito T."/>
            <person name="Morimoto Y."/>
            <person name="Kuroda M."/>
            <person name="Cui L."/>
            <person name="Takahashi M."/>
            <person name="Ankai A."/>
            <person name="Baba S."/>
            <person name="Fukui S."/>
            <person name="Lee J.C."/>
            <person name="Hiramatsu K."/>
        </authorList>
    </citation>
    <scope>NUCLEOTIDE SEQUENCE [LARGE SCALE GENOMIC DNA]</scope>
    <source>
        <strain>JCSC1435</strain>
    </source>
</reference>